<gene>
    <name evidence="1" type="primary">gpmI</name>
    <name type="synonym">pgm1</name>
    <name type="ordered locus">RPA0340</name>
</gene>
<dbReference type="EC" id="5.4.2.12" evidence="1"/>
<dbReference type="EMBL" id="BX572594">
    <property type="protein sequence ID" value="CAE25784.1"/>
    <property type="molecule type" value="Genomic_DNA"/>
</dbReference>
<dbReference type="RefSeq" id="WP_011155908.1">
    <property type="nucleotide sequence ID" value="NZ_CP116810.1"/>
</dbReference>
<dbReference type="SMR" id="Q6NCX7"/>
<dbReference type="STRING" id="258594.RPA0340"/>
<dbReference type="GeneID" id="66891351"/>
<dbReference type="eggNOG" id="COG0696">
    <property type="taxonomic scope" value="Bacteria"/>
</dbReference>
<dbReference type="HOGENOM" id="CLU_026099_2_0_5"/>
<dbReference type="PhylomeDB" id="Q6NCX7"/>
<dbReference type="UniPathway" id="UPA00109">
    <property type="reaction ID" value="UER00186"/>
</dbReference>
<dbReference type="GO" id="GO:0005829">
    <property type="term" value="C:cytosol"/>
    <property type="evidence" value="ECO:0007669"/>
    <property type="project" value="TreeGrafter"/>
</dbReference>
<dbReference type="GO" id="GO:0030145">
    <property type="term" value="F:manganese ion binding"/>
    <property type="evidence" value="ECO:0007669"/>
    <property type="project" value="UniProtKB-UniRule"/>
</dbReference>
<dbReference type="GO" id="GO:0004619">
    <property type="term" value="F:phosphoglycerate mutase activity"/>
    <property type="evidence" value="ECO:0007669"/>
    <property type="project" value="UniProtKB-EC"/>
</dbReference>
<dbReference type="GO" id="GO:0006007">
    <property type="term" value="P:glucose catabolic process"/>
    <property type="evidence" value="ECO:0007669"/>
    <property type="project" value="InterPro"/>
</dbReference>
<dbReference type="GO" id="GO:0006096">
    <property type="term" value="P:glycolytic process"/>
    <property type="evidence" value="ECO:0007669"/>
    <property type="project" value="UniProtKB-UniRule"/>
</dbReference>
<dbReference type="CDD" id="cd16010">
    <property type="entry name" value="iPGM"/>
    <property type="match status" value="1"/>
</dbReference>
<dbReference type="FunFam" id="3.40.1450.10:FF:000002">
    <property type="entry name" value="2,3-bisphosphoglycerate-independent phosphoglycerate mutase"/>
    <property type="match status" value="1"/>
</dbReference>
<dbReference type="Gene3D" id="3.40.720.10">
    <property type="entry name" value="Alkaline Phosphatase, subunit A"/>
    <property type="match status" value="1"/>
</dbReference>
<dbReference type="Gene3D" id="3.40.1450.10">
    <property type="entry name" value="BPG-independent phosphoglycerate mutase, domain B"/>
    <property type="match status" value="1"/>
</dbReference>
<dbReference type="HAMAP" id="MF_01038">
    <property type="entry name" value="GpmI"/>
    <property type="match status" value="1"/>
</dbReference>
<dbReference type="InterPro" id="IPR017850">
    <property type="entry name" value="Alkaline_phosphatase_core_sf"/>
</dbReference>
<dbReference type="InterPro" id="IPR011258">
    <property type="entry name" value="BPG-indep_PGM_N"/>
</dbReference>
<dbReference type="InterPro" id="IPR006124">
    <property type="entry name" value="Metalloenzyme"/>
</dbReference>
<dbReference type="InterPro" id="IPR036646">
    <property type="entry name" value="PGAM_B_sf"/>
</dbReference>
<dbReference type="InterPro" id="IPR005995">
    <property type="entry name" value="Pgm_bpd_ind"/>
</dbReference>
<dbReference type="NCBIfam" id="TIGR01307">
    <property type="entry name" value="pgm_bpd_ind"/>
    <property type="match status" value="1"/>
</dbReference>
<dbReference type="PANTHER" id="PTHR31637">
    <property type="entry name" value="2,3-BISPHOSPHOGLYCERATE-INDEPENDENT PHOSPHOGLYCERATE MUTASE"/>
    <property type="match status" value="1"/>
</dbReference>
<dbReference type="PANTHER" id="PTHR31637:SF0">
    <property type="entry name" value="2,3-BISPHOSPHOGLYCERATE-INDEPENDENT PHOSPHOGLYCERATE MUTASE"/>
    <property type="match status" value="1"/>
</dbReference>
<dbReference type="Pfam" id="PF06415">
    <property type="entry name" value="iPGM_N"/>
    <property type="match status" value="1"/>
</dbReference>
<dbReference type="Pfam" id="PF01676">
    <property type="entry name" value="Metalloenzyme"/>
    <property type="match status" value="1"/>
</dbReference>
<dbReference type="PIRSF" id="PIRSF001492">
    <property type="entry name" value="IPGAM"/>
    <property type="match status" value="1"/>
</dbReference>
<dbReference type="SUPFAM" id="SSF64158">
    <property type="entry name" value="2,3-Bisphosphoglycerate-independent phosphoglycerate mutase, substrate-binding domain"/>
    <property type="match status" value="1"/>
</dbReference>
<dbReference type="SUPFAM" id="SSF53649">
    <property type="entry name" value="Alkaline phosphatase-like"/>
    <property type="match status" value="1"/>
</dbReference>
<evidence type="ECO:0000255" key="1">
    <source>
        <dbReference type="HAMAP-Rule" id="MF_01038"/>
    </source>
</evidence>
<proteinExistence type="inferred from homology"/>
<reference key="1">
    <citation type="journal article" date="2004" name="Nat. Biotechnol.">
        <title>Complete genome sequence of the metabolically versatile photosynthetic bacterium Rhodopseudomonas palustris.</title>
        <authorList>
            <person name="Larimer F.W."/>
            <person name="Chain P."/>
            <person name="Hauser L."/>
            <person name="Lamerdin J.E."/>
            <person name="Malfatti S."/>
            <person name="Do L."/>
            <person name="Land M.L."/>
            <person name="Pelletier D.A."/>
            <person name="Beatty J.T."/>
            <person name="Lang A.S."/>
            <person name="Tabita F.R."/>
            <person name="Gibson J.L."/>
            <person name="Hanson T.E."/>
            <person name="Bobst C."/>
            <person name="Torres y Torres J.L."/>
            <person name="Peres C."/>
            <person name="Harrison F.H."/>
            <person name="Gibson J."/>
            <person name="Harwood C.S."/>
        </authorList>
    </citation>
    <scope>NUCLEOTIDE SEQUENCE [LARGE SCALE GENOMIC DNA]</scope>
    <source>
        <strain>ATCC BAA-98 / CGA009</strain>
    </source>
</reference>
<name>GPMI_RHOPA</name>
<keyword id="KW-0324">Glycolysis</keyword>
<keyword id="KW-0413">Isomerase</keyword>
<keyword id="KW-0464">Manganese</keyword>
<keyword id="KW-0479">Metal-binding</keyword>
<sequence>MQSRRPVMLVILDGWGWREDPADNAVLQAKTPTFDALWTNGPHAFLRTSGKSVGLPNGQMGNSEVGHLNIGAGRVVMQDLPRISDAIANGEIERAPGLVAFIDKLKASGGTCHLMGLVSPGGVHSLQDHACALAKILAKAGVKTVLHAFTDGRDTPPKSAVDDIVRLRAELPPNVPIATVSGRYYAMDRDNRWERVSKAYGVIADADGPRFADANAVIADGYAAGVNDEFIVPAVIGDYQGMRDGDGVLCFNFRADRVREILAALLDSAFAGFPRKQVKQIAAAAGMTQYSTALDALMGTIFPPQSLVNGLGQVVADAGLHQLRMAETEKYPHVTYFLNGGEEVPYPGEDRIMVPSPKVATYDLQPEMSAPELGDKAVAAIESGKYDLIVLNFANPDMVGHTGSLPAAIKAVETVDTQLGHIVAAIRKAGGALLVTADHGNCEMMRDPETGGPHTAHTTNPVPVLLVGDNGPLADGQLSDLAPTLLKLMELPQPAEMTGKSLIG</sequence>
<comment type="function">
    <text evidence="1">Catalyzes the interconversion of 2-phosphoglycerate and 3-phosphoglycerate.</text>
</comment>
<comment type="catalytic activity">
    <reaction evidence="1">
        <text>(2R)-2-phosphoglycerate = (2R)-3-phosphoglycerate</text>
        <dbReference type="Rhea" id="RHEA:15901"/>
        <dbReference type="ChEBI" id="CHEBI:58272"/>
        <dbReference type="ChEBI" id="CHEBI:58289"/>
        <dbReference type="EC" id="5.4.2.12"/>
    </reaction>
</comment>
<comment type="cofactor">
    <cofactor evidence="1">
        <name>Mn(2+)</name>
        <dbReference type="ChEBI" id="CHEBI:29035"/>
    </cofactor>
    <text evidence="1">Binds 2 manganese ions per subunit.</text>
</comment>
<comment type="pathway">
    <text evidence="1">Carbohydrate degradation; glycolysis; pyruvate from D-glyceraldehyde 3-phosphate: step 3/5.</text>
</comment>
<comment type="subunit">
    <text evidence="1">Monomer.</text>
</comment>
<comment type="similarity">
    <text evidence="1">Belongs to the BPG-independent phosphoglycerate mutase family.</text>
</comment>
<feature type="chain" id="PRO_0000212196" description="2,3-bisphosphoglycerate-independent phosphoglycerate mutase">
    <location>
        <begin position="1"/>
        <end position="504"/>
    </location>
</feature>
<feature type="active site" description="Phosphoserine intermediate" evidence="1">
    <location>
        <position position="63"/>
    </location>
</feature>
<feature type="binding site" evidence="1">
    <location>
        <position position="13"/>
    </location>
    <ligand>
        <name>Mn(2+)</name>
        <dbReference type="ChEBI" id="CHEBI:29035"/>
        <label>2</label>
    </ligand>
</feature>
<feature type="binding site" evidence="1">
    <location>
        <position position="63"/>
    </location>
    <ligand>
        <name>Mn(2+)</name>
        <dbReference type="ChEBI" id="CHEBI:29035"/>
        <label>2</label>
    </ligand>
</feature>
<feature type="binding site" evidence="1">
    <location>
        <position position="124"/>
    </location>
    <ligand>
        <name>substrate</name>
    </ligand>
</feature>
<feature type="binding site" evidence="1">
    <location>
        <begin position="153"/>
        <end position="154"/>
    </location>
    <ligand>
        <name>substrate</name>
    </ligand>
</feature>
<feature type="binding site" evidence="1">
    <location>
        <position position="183"/>
    </location>
    <ligand>
        <name>substrate</name>
    </ligand>
</feature>
<feature type="binding site" evidence="1">
    <location>
        <position position="189"/>
    </location>
    <ligand>
        <name>substrate</name>
    </ligand>
</feature>
<feature type="binding site" evidence="1">
    <location>
        <begin position="254"/>
        <end position="257"/>
    </location>
    <ligand>
        <name>substrate</name>
    </ligand>
</feature>
<feature type="binding site" evidence="1">
    <location>
        <position position="330"/>
    </location>
    <ligand>
        <name>substrate</name>
    </ligand>
</feature>
<feature type="binding site" evidence="1">
    <location>
        <position position="397"/>
    </location>
    <ligand>
        <name>Mn(2+)</name>
        <dbReference type="ChEBI" id="CHEBI:29035"/>
        <label>1</label>
    </ligand>
</feature>
<feature type="binding site" evidence="1">
    <location>
        <position position="401"/>
    </location>
    <ligand>
        <name>Mn(2+)</name>
        <dbReference type="ChEBI" id="CHEBI:29035"/>
        <label>1</label>
    </ligand>
</feature>
<feature type="binding site" evidence="1">
    <location>
        <position position="438"/>
    </location>
    <ligand>
        <name>Mn(2+)</name>
        <dbReference type="ChEBI" id="CHEBI:29035"/>
        <label>2</label>
    </ligand>
</feature>
<feature type="binding site" evidence="1">
    <location>
        <position position="439"/>
    </location>
    <ligand>
        <name>Mn(2+)</name>
        <dbReference type="ChEBI" id="CHEBI:29035"/>
        <label>2</label>
    </ligand>
</feature>
<feature type="binding site" evidence="1">
    <location>
        <position position="457"/>
    </location>
    <ligand>
        <name>Mn(2+)</name>
        <dbReference type="ChEBI" id="CHEBI:29035"/>
        <label>1</label>
    </ligand>
</feature>
<protein>
    <recommendedName>
        <fullName evidence="1">2,3-bisphosphoglycerate-independent phosphoglycerate mutase</fullName>
        <shortName evidence="1">BPG-independent PGAM</shortName>
        <shortName evidence="1">Phosphoglyceromutase</shortName>
        <shortName evidence="1">iPGM</shortName>
        <ecNumber evidence="1">5.4.2.12</ecNumber>
    </recommendedName>
</protein>
<accession>Q6NCX7</accession>
<organism>
    <name type="scientific">Rhodopseudomonas palustris (strain ATCC BAA-98 / CGA009)</name>
    <dbReference type="NCBI Taxonomy" id="258594"/>
    <lineage>
        <taxon>Bacteria</taxon>
        <taxon>Pseudomonadati</taxon>
        <taxon>Pseudomonadota</taxon>
        <taxon>Alphaproteobacteria</taxon>
        <taxon>Hyphomicrobiales</taxon>
        <taxon>Nitrobacteraceae</taxon>
        <taxon>Rhodopseudomonas</taxon>
    </lineage>
</organism>